<organism>
    <name type="scientific">Methanocella arvoryzae (strain DSM 22066 / NBRC 105507 / MRE50)</name>
    <dbReference type="NCBI Taxonomy" id="351160"/>
    <lineage>
        <taxon>Archaea</taxon>
        <taxon>Methanobacteriati</taxon>
        <taxon>Methanobacteriota</taxon>
        <taxon>Stenosarchaea group</taxon>
        <taxon>Methanomicrobia</taxon>
        <taxon>Methanocellales</taxon>
        <taxon>Methanocellaceae</taxon>
        <taxon>Methanocella</taxon>
    </lineage>
</organism>
<gene>
    <name type="ordered locus">UNCMA_10520</name>
    <name type="ORF">RCIX2051</name>
</gene>
<reference key="1">
    <citation type="journal article" date="2006" name="Science">
        <title>Genome of rice cluster I archaea -- the key methane producers in the rice rhizosphere.</title>
        <authorList>
            <person name="Erkel C."/>
            <person name="Kube M."/>
            <person name="Reinhardt R."/>
            <person name="Liesack W."/>
        </authorList>
    </citation>
    <scope>NUCLEOTIDE SEQUENCE [LARGE SCALE GENOMIC DNA]</scope>
    <source>
        <strain>DSM 22066 / NBRC 105507 / MRE50</strain>
    </source>
</reference>
<proteinExistence type="inferred from homology"/>
<dbReference type="EC" id="1.3.7.11" evidence="1"/>
<dbReference type="EMBL" id="AM114193">
    <property type="protein sequence ID" value="CAJ37194.1"/>
    <property type="molecule type" value="Genomic_DNA"/>
</dbReference>
<dbReference type="RefSeq" id="WP_012035380.1">
    <property type="nucleotide sequence ID" value="NC_009464.1"/>
</dbReference>
<dbReference type="SMR" id="Q0W349"/>
<dbReference type="STRING" id="351160.RCIX2051"/>
<dbReference type="GeneID" id="5145419"/>
<dbReference type="KEGG" id="rci:RCIX2051"/>
<dbReference type="PATRIC" id="fig|351160.9.peg.1086"/>
<dbReference type="eggNOG" id="arCOG00570">
    <property type="taxonomic scope" value="Archaea"/>
</dbReference>
<dbReference type="OrthoDB" id="6062at2157"/>
<dbReference type="UniPathway" id="UPA00940"/>
<dbReference type="Proteomes" id="UP000000663">
    <property type="component" value="Chromosome"/>
</dbReference>
<dbReference type="GO" id="GO:0016020">
    <property type="term" value="C:membrane"/>
    <property type="evidence" value="ECO:0007669"/>
    <property type="project" value="GOC"/>
</dbReference>
<dbReference type="GO" id="GO:0050660">
    <property type="term" value="F:flavin adenine dinucleotide binding"/>
    <property type="evidence" value="ECO:0007669"/>
    <property type="project" value="UniProtKB-UniRule"/>
</dbReference>
<dbReference type="GO" id="GO:0045550">
    <property type="term" value="F:geranylgeranyl reductase activity"/>
    <property type="evidence" value="ECO:0007669"/>
    <property type="project" value="InterPro"/>
</dbReference>
<dbReference type="GO" id="GO:0016636">
    <property type="term" value="F:oxidoreductase activity, acting on the CH-CH group of donors, iron-sulfur protein as acceptor"/>
    <property type="evidence" value="ECO:0007669"/>
    <property type="project" value="UniProtKB-UniRule"/>
</dbReference>
<dbReference type="GO" id="GO:0016628">
    <property type="term" value="F:oxidoreductase activity, acting on the CH-CH group of donors, NAD or NADP as acceptor"/>
    <property type="evidence" value="ECO:0007669"/>
    <property type="project" value="InterPro"/>
</dbReference>
<dbReference type="GO" id="GO:0046474">
    <property type="term" value="P:glycerophospholipid biosynthetic process"/>
    <property type="evidence" value="ECO:0007669"/>
    <property type="project" value="UniProtKB-UniRule"/>
</dbReference>
<dbReference type="GO" id="GO:0046467">
    <property type="term" value="P:membrane lipid biosynthetic process"/>
    <property type="evidence" value="ECO:0007669"/>
    <property type="project" value="InterPro"/>
</dbReference>
<dbReference type="Gene3D" id="3.30.9.10">
    <property type="entry name" value="D-Amino Acid Oxidase, subunit A, domain 2"/>
    <property type="match status" value="1"/>
</dbReference>
<dbReference type="Gene3D" id="3.50.50.60">
    <property type="entry name" value="FAD/NAD(P)-binding domain"/>
    <property type="match status" value="1"/>
</dbReference>
<dbReference type="HAMAP" id="MF_01287">
    <property type="entry name" value="DGGGPL_reductase"/>
    <property type="match status" value="1"/>
</dbReference>
<dbReference type="InterPro" id="IPR023590">
    <property type="entry name" value="DGGGPL_reductase"/>
</dbReference>
<dbReference type="InterPro" id="IPR003953">
    <property type="entry name" value="FAD-dep_OxRdtase_2_FAD-bd"/>
</dbReference>
<dbReference type="InterPro" id="IPR036188">
    <property type="entry name" value="FAD/NAD-bd_sf"/>
</dbReference>
<dbReference type="InterPro" id="IPR011777">
    <property type="entry name" value="Geranylgeranyl_Rdtase_fam"/>
</dbReference>
<dbReference type="InterPro" id="IPR050407">
    <property type="entry name" value="Geranylgeranyl_reductase"/>
</dbReference>
<dbReference type="InterPro" id="IPR054715">
    <property type="entry name" value="GGR_cat"/>
</dbReference>
<dbReference type="NCBIfam" id="TIGR02032">
    <property type="entry name" value="GG-red-SF"/>
    <property type="match status" value="1"/>
</dbReference>
<dbReference type="PANTHER" id="PTHR42685:SF18">
    <property type="entry name" value="DIGERANYLGERANYLGLYCEROPHOSPHOLIPID REDUCTASE"/>
    <property type="match status" value="1"/>
</dbReference>
<dbReference type="PANTHER" id="PTHR42685">
    <property type="entry name" value="GERANYLGERANYL DIPHOSPHATE REDUCTASE"/>
    <property type="match status" value="1"/>
</dbReference>
<dbReference type="Pfam" id="PF00890">
    <property type="entry name" value="FAD_binding_2"/>
    <property type="match status" value="1"/>
</dbReference>
<dbReference type="Pfam" id="PF22578">
    <property type="entry name" value="GGR_cat"/>
    <property type="match status" value="1"/>
</dbReference>
<dbReference type="PRINTS" id="PR00420">
    <property type="entry name" value="RNGMNOXGNASE"/>
</dbReference>
<dbReference type="SUPFAM" id="SSF51905">
    <property type="entry name" value="FAD/NAD(P)-binding domain"/>
    <property type="match status" value="1"/>
</dbReference>
<sequence length="392" mass="41749">MKSEYDVIVVGAGPGGSLAAKTAAEQGLDVLLIEKRQEIGDPVRCAEGVGKAGLQEFVEPDPKWISADIKCARIFSPDGTMVELSEKMAGNEVGFVLERKIFDRELAKMAAKAGAEVQVKTQATGLIIENGQVCGITGKRHGDEFTARAKVVVAADGVESKVGRWAGINTTLKMKDIETCAQFLMTDINIKPNSCDFYLGSKYAPGGYVWVFPKGDREANVGLGMLASHYKGKHPIEYLREFVADKFPEGKILETVVGAVPVSGMLPKLSTGGLVLVGDAGHVSDPITGGGIINAMSSGRIAGNIIANCIRAGDVSAKALSRYDAEVREALGKSLDKNYKIKEVVTKVSDNTMNVAAHSLQGVDFENVTVTKLVKEIVTRNPALLKELVGLI</sequence>
<comment type="function">
    <text evidence="1">Is involved in the reduction of 2,3-digeranylgeranylglycerophospholipids (unsaturated archaeols) into 2,3-diphytanylglycerophospholipids (saturated archaeols) in the biosynthesis of archaeal membrane lipids. Catalyzes the formation of archaetidic acid (2,3-di-O-phytanyl-sn-glyceryl phosphate) from 2,3-di-O-geranylgeranylglyceryl phosphate (DGGGP) via the hydrogenation of each double bond of the isoprenoid chains. Is also probably able to reduce double bonds of geranyl groups in CDP-2,3-bis-O-(geranylgeranyl)-sn-glycerol and archaetidylserine, thus acting at various stages in the biosynthesis of archaeal membrane lipids.</text>
</comment>
<comment type="catalytic activity">
    <reaction evidence="1">
        <text>a 2,3-bis-O-phytanyl-sn-glycerol 1-phospholipid + 8 oxidized 2[4Fe-4S]-[ferredoxin] = a 2,3-bis-O-(geranylgeranyl)-sn-glycerol 1-phospholipid + 8 reduced 2[4Fe-4S]-[ferredoxin] + 16 H(+)</text>
        <dbReference type="Rhea" id="RHEA:54324"/>
        <dbReference type="Rhea" id="RHEA-COMP:10002"/>
        <dbReference type="Rhea" id="RHEA-COMP:10004"/>
        <dbReference type="ChEBI" id="CHEBI:15378"/>
        <dbReference type="ChEBI" id="CHEBI:33722"/>
        <dbReference type="ChEBI" id="CHEBI:33723"/>
        <dbReference type="ChEBI" id="CHEBI:138139"/>
        <dbReference type="ChEBI" id="CHEBI:138140"/>
        <dbReference type="EC" id="1.3.7.11"/>
    </reaction>
    <physiologicalReaction direction="right-to-left" evidence="1">
        <dbReference type="Rhea" id="RHEA:54326"/>
    </physiologicalReaction>
</comment>
<comment type="catalytic activity">
    <reaction evidence="1">
        <text>2,3-bis-O-(phytanyl)-sn-glycerol 1-phosphate + 8 oxidized 2[4Fe-4S]-[ferredoxin] = 2,3-bis-O-(geranylgeranyl)-sn-glycerol 1-phosphate + 8 reduced 2[4Fe-4S]-[ferredoxin] + 16 H(+)</text>
        <dbReference type="Rhea" id="RHEA:36159"/>
        <dbReference type="Rhea" id="RHEA-COMP:10002"/>
        <dbReference type="Rhea" id="RHEA-COMP:10004"/>
        <dbReference type="ChEBI" id="CHEBI:15378"/>
        <dbReference type="ChEBI" id="CHEBI:33722"/>
        <dbReference type="ChEBI" id="CHEBI:33723"/>
        <dbReference type="ChEBI" id="CHEBI:58837"/>
        <dbReference type="ChEBI" id="CHEBI:73125"/>
        <dbReference type="EC" id="1.3.7.11"/>
    </reaction>
    <physiologicalReaction direction="right-to-left" evidence="1">
        <dbReference type="Rhea" id="RHEA:36161"/>
    </physiologicalReaction>
</comment>
<comment type="catalytic activity">
    <reaction evidence="1">
        <text>a 2,3-bis-O-phytanyl-sn-glycerol 1-phospholipid + 8 A = a 2,3-bis-O-(geranylgeranyl)-sn-glycerol 1-phospholipid + 8 AH2</text>
        <dbReference type="Rhea" id="RHEA:64376"/>
        <dbReference type="ChEBI" id="CHEBI:13193"/>
        <dbReference type="ChEBI" id="CHEBI:17499"/>
        <dbReference type="ChEBI" id="CHEBI:138139"/>
        <dbReference type="ChEBI" id="CHEBI:138140"/>
    </reaction>
    <physiologicalReaction direction="right-to-left" evidence="1">
        <dbReference type="Rhea" id="RHEA:64378"/>
    </physiologicalReaction>
</comment>
<comment type="catalytic activity">
    <reaction evidence="1">
        <text>CDP-2,3-bis-O-(geranylgeranyl)-sn-glycerol + 8 AH2 = CDP-2,3-bis-O-(phytanyl)-sn-glycerol + 8 A</text>
        <dbReference type="Rhea" id="RHEA:84207"/>
        <dbReference type="ChEBI" id="CHEBI:13193"/>
        <dbReference type="ChEBI" id="CHEBI:17499"/>
        <dbReference type="ChEBI" id="CHEBI:58838"/>
        <dbReference type="ChEBI" id="CHEBI:74004"/>
    </reaction>
    <physiologicalReaction direction="left-to-right" evidence="1">
        <dbReference type="Rhea" id="RHEA:84208"/>
    </physiologicalReaction>
</comment>
<comment type="catalytic activity">
    <reaction evidence="1">
        <text>archaetidylserine + 8 AH2 = 2,3-bis-O-phytanyl-sn-glycero-3-phospho-L-serine + 8 A</text>
        <dbReference type="Rhea" id="RHEA:84215"/>
        <dbReference type="ChEBI" id="CHEBI:13193"/>
        <dbReference type="ChEBI" id="CHEBI:17499"/>
        <dbReference type="ChEBI" id="CHEBI:71517"/>
        <dbReference type="ChEBI" id="CHEBI:74853"/>
    </reaction>
    <physiologicalReaction direction="left-to-right" evidence="1">
        <dbReference type="Rhea" id="RHEA:84216"/>
    </physiologicalReaction>
</comment>
<comment type="cofactor">
    <cofactor evidence="1">
        <name>FAD</name>
        <dbReference type="ChEBI" id="CHEBI:57692"/>
    </cofactor>
    <text evidence="1">Binds 1 FAD per subunit.</text>
</comment>
<comment type="pathway">
    <text evidence="1">Membrane lipid metabolism; glycerophospholipid metabolism.</text>
</comment>
<comment type="miscellaneous">
    <text evidence="1">Reduction reaction proceeds via syn addition of hydrogen for double bonds.</text>
</comment>
<comment type="similarity">
    <text evidence="1">Belongs to the geranylgeranyl reductase family. DGGGPL reductase subfamily.</text>
</comment>
<keyword id="KW-0274">FAD</keyword>
<keyword id="KW-0285">Flavoprotein</keyword>
<keyword id="KW-0444">Lipid biosynthesis</keyword>
<keyword id="KW-0443">Lipid metabolism</keyword>
<keyword id="KW-0560">Oxidoreductase</keyword>
<keyword id="KW-0594">Phospholipid biosynthesis</keyword>
<keyword id="KW-1208">Phospholipid metabolism</keyword>
<keyword id="KW-1185">Reference proteome</keyword>
<protein>
    <recommendedName>
        <fullName evidence="1">Digeranylgeranylglycerophospholipid reductase</fullName>
        <shortName evidence="1">DGGGPL reductase</shortName>
        <ecNumber evidence="1">1.3.7.11</ecNumber>
    </recommendedName>
    <alternativeName>
        <fullName evidence="1">2,3-bis-O-geranylgeranylglyceryl phosphate reductase</fullName>
    </alternativeName>
    <alternativeName>
        <fullName evidence="1">Geranylgeranyl reductase</fullName>
        <shortName evidence="1">GGR</shortName>
    </alternativeName>
</protein>
<feature type="chain" id="PRO_0000351480" description="Digeranylgeranylglycerophospholipid reductase">
    <location>
        <begin position="1"/>
        <end position="392"/>
    </location>
</feature>
<feature type="binding site" evidence="1">
    <location>
        <position position="15"/>
    </location>
    <ligand>
        <name>FAD</name>
        <dbReference type="ChEBI" id="CHEBI:57692"/>
    </ligand>
</feature>
<feature type="binding site" evidence="1">
    <location>
        <position position="34"/>
    </location>
    <ligand>
        <name>FAD</name>
        <dbReference type="ChEBI" id="CHEBI:57692"/>
    </ligand>
</feature>
<feature type="binding site" evidence="1">
    <location>
        <position position="45"/>
    </location>
    <ligand>
        <name>FAD</name>
        <dbReference type="ChEBI" id="CHEBI:57692"/>
    </ligand>
</feature>
<feature type="binding site" evidence="1">
    <location>
        <position position="46"/>
    </location>
    <ligand>
        <name>FAD</name>
        <dbReference type="ChEBI" id="CHEBI:57692"/>
    </ligand>
</feature>
<feature type="binding site" evidence="1">
    <location>
        <position position="48"/>
    </location>
    <ligand>
        <name>FAD</name>
        <dbReference type="ChEBI" id="CHEBI:57692"/>
    </ligand>
</feature>
<feature type="binding site" evidence="1">
    <location>
        <position position="99"/>
    </location>
    <ligand>
        <name>FAD</name>
        <dbReference type="ChEBI" id="CHEBI:57692"/>
    </ligand>
</feature>
<feature type="binding site" evidence="1">
    <location>
        <position position="123"/>
    </location>
    <ligand>
        <name>FAD</name>
        <dbReference type="ChEBI" id="CHEBI:57692"/>
    </ligand>
</feature>
<feature type="binding site" evidence="1">
    <location>
        <position position="279"/>
    </location>
    <ligand>
        <name>FAD</name>
        <dbReference type="ChEBI" id="CHEBI:57692"/>
    </ligand>
</feature>
<feature type="binding site" evidence="1">
    <location>
        <position position="291"/>
    </location>
    <ligand>
        <name>FAD</name>
        <dbReference type="ChEBI" id="CHEBI:57692"/>
    </ligand>
</feature>
<feature type="binding site" evidence="1">
    <location>
        <position position="292"/>
    </location>
    <ligand>
        <name>FAD</name>
        <dbReference type="ChEBI" id="CHEBI:57692"/>
    </ligand>
</feature>
<feature type="binding site" evidence="1">
    <location>
        <position position="370"/>
    </location>
    <ligand>
        <name>a 2,3-bis-O-(geranylgeranyl)-sn-glycerol 1-phospholipid</name>
        <dbReference type="ChEBI" id="CHEBI:138140"/>
    </ligand>
</feature>
<accession>Q0W349</accession>
<evidence type="ECO:0000255" key="1">
    <source>
        <dbReference type="HAMAP-Rule" id="MF_01287"/>
    </source>
</evidence>
<name>GGR_METAR</name>